<dbReference type="EMBL" id="AE009948">
    <property type="protein sequence ID" value="AAN00348.1"/>
    <property type="molecule type" value="Genomic_DNA"/>
</dbReference>
<dbReference type="RefSeq" id="NP_688475.1">
    <property type="nucleotide sequence ID" value="NC_004116.1"/>
</dbReference>
<dbReference type="RefSeq" id="WP_000238456.1">
    <property type="nucleotide sequence ID" value="NC_004116.1"/>
</dbReference>
<dbReference type="SMR" id="P66865"/>
<dbReference type="STRING" id="208435.SAG1481"/>
<dbReference type="GeneID" id="66886342"/>
<dbReference type="KEGG" id="sag:SAG1481"/>
<dbReference type="PATRIC" id="fig|208435.3.peg.1491"/>
<dbReference type="HOGENOM" id="CLU_108953_0_0_9"/>
<dbReference type="OrthoDB" id="9805462at2"/>
<dbReference type="Proteomes" id="UP000000821">
    <property type="component" value="Chromosome"/>
</dbReference>
<dbReference type="GO" id="GO:0005829">
    <property type="term" value="C:cytosol"/>
    <property type="evidence" value="ECO:0007669"/>
    <property type="project" value="TreeGrafter"/>
</dbReference>
<dbReference type="GO" id="GO:0003723">
    <property type="term" value="F:RNA binding"/>
    <property type="evidence" value="ECO:0007669"/>
    <property type="project" value="UniProtKB-UniRule"/>
</dbReference>
<dbReference type="GO" id="GO:0070929">
    <property type="term" value="P:trans-translation"/>
    <property type="evidence" value="ECO:0007669"/>
    <property type="project" value="UniProtKB-UniRule"/>
</dbReference>
<dbReference type="CDD" id="cd09294">
    <property type="entry name" value="SmpB"/>
    <property type="match status" value="1"/>
</dbReference>
<dbReference type="Gene3D" id="2.40.280.10">
    <property type="match status" value="1"/>
</dbReference>
<dbReference type="HAMAP" id="MF_00023">
    <property type="entry name" value="SmpB"/>
    <property type="match status" value="1"/>
</dbReference>
<dbReference type="InterPro" id="IPR023620">
    <property type="entry name" value="SmpB"/>
</dbReference>
<dbReference type="InterPro" id="IPR000037">
    <property type="entry name" value="SsrA-bd_prot"/>
</dbReference>
<dbReference type="InterPro" id="IPR020081">
    <property type="entry name" value="SsrA-bd_prot_CS"/>
</dbReference>
<dbReference type="NCBIfam" id="NF003843">
    <property type="entry name" value="PRK05422.1"/>
    <property type="match status" value="1"/>
</dbReference>
<dbReference type="NCBIfam" id="TIGR00086">
    <property type="entry name" value="smpB"/>
    <property type="match status" value="1"/>
</dbReference>
<dbReference type="PANTHER" id="PTHR30308:SF2">
    <property type="entry name" value="SSRA-BINDING PROTEIN"/>
    <property type="match status" value="1"/>
</dbReference>
<dbReference type="PANTHER" id="PTHR30308">
    <property type="entry name" value="TMRNA-BINDING COMPONENT OF TRANS-TRANSLATION TAGGING COMPLEX"/>
    <property type="match status" value="1"/>
</dbReference>
<dbReference type="Pfam" id="PF01668">
    <property type="entry name" value="SmpB"/>
    <property type="match status" value="1"/>
</dbReference>
<dbReference type="SUPFAM" id="SSF74982">
    <property type="entry name" value="Small protein B (SmpB)"/>
    <property type="match status" value="1"/>
</dbReference>
<dbReference type="PROSITE" id="PS01317">
    <property type="entry name" value="SSRP"/>
    <property type="match status" value="1"/>
</dbReference>
<comment type="function">
    <text evidence="1">Required for rescue of stalled ribosomes mediated by trans-translation. Binds to transfer-messenger RNA (tmRNA), required for stable association of tmRNA with ribosomes. tmRNA and SmpB together mimic tRNA shape, replacing the anticodon stem-loop with SmpB. tmRNA is encoded by the ssrA gene; the 2 termini fold to resemble tRNA(Ala) and it encodes a 'tag peptide', a short internal open reading frame. During trans-translation Ala-aminoacylated tmRNA acts like a tRNA, entering the A-site of stalled ribosomes, displacing the stalled mRNA. The ribosome then switches to translate the ORF on the tmRNA; the nascent peptide is terminated with the 'tag peptide' encoded by the tmRNA and targeted for degradation. The ribosome is freed to recommence translation, which seems to be the essential function of trans-translation.</text>
</comment>
<comment type="subcellular location">
    <subcellularLocation>
        <location evidence="1">Cytoplasm</location>
    </subcellularLocation>
    <text evidence="1">The tmRNA-SmpB complex associates with stalled 70S ribosomes.</text>
</comment>
<comment type="similarity">
    <text evidence="1">Belongs to the SmpB family.</text>
</comment>
<sequence>MVKGQGNVVAQNKKAHHDYTIVETIEAGIVLTGTEIKSVRAARITLKDGYAQIKNGEAWLINVHITPYDQGNIWNQDPDRTRKLLLKKREIEKISNELKGTGMTLVPLKVYLKDGFAKVLLGLAKGKHDYDKRESIKRREQNRDIARQLKNYNSR</sequence>
<evidence type="ECO:0000255" key="1">
    <source>
        <dbReference type="HAMAP-Rule" id="MF_00023"/>
    </source>
</evidence>
<feature type="chain" id="PRO_0000103037" description="SsrA-binding protein">
    <location>
        <begin position="1"/>
        <end position="155"/>
    </location>
</feature>
<organism>
    <name type="scientific">Streptococcus agalactiae serotype V (strain ATCC BAA-611 / 2603 V/R)</name>
    <dbReference type="NCBI Taxonomy" id="208435"/>
    <lineage>
        <taxon>Bacteria</taxon>
        <taxon>Bacillati</taxon>
        <taxon>Bacillota</taxon>
        <taxon>Bacilli</taxon>
        <taxon>Lactobacillales</taxon>
        <taxon>Streptococcaceae</taxon>
        <taxon>Streptococcus</taxon>
    </lineage>
</organism>
<protein>
    <recommendedName>
        <fullName evidence="1">SsrA-binding protein</fullName>
    </recommendedName>
    <alternativeName>
        <fullName evidence="1">Small protein B</fullName>
    </alternativeName>
</protein>
<reference key="1">
    <citation type="journal article" date="2002" name="Proc. Natl. Acad. Sci. U.S.A.">
        <title>Complete genome sequence and comparative genomic analysis of an emerging human pathogen, serotype V Streptococcus agalactiae.</title>
        <authorList>
            <person name="Tettelin H."/>
            <person name="Masignani V."/>
            <person name="Cieslewicz M.J."/>
            <person name="Eisen J.A."/>
            <person name="Peterson S.N."/>
            <person name="Wessels M.R."/>
            <person name="Paulsen I.T."/>
            <person name="Nelson K.E."/>
            <person name="Margarit I."/>
            <person name="Read T.D."/>
            <person name="Madoff L.C."/>
            <person name="Wolf A.M."/>
            <person name="Beanan M.J."/>
            <person name="Brinkac L.M."/>
            <person name="Daugherty S.C."/>
            <person name="DeBoy R.T."/>
            <person name="Durkin A.S."/>
            <person name="Kolonay J.F."/>
            <person name="Madupu R."/>
            <person name="Lewis M.R."/>
            <person name="Radune D."/>
            <person name="Fedorova N.B."/>
            <person name="Scanlan D."/>
            <person name="Khouri H.M."/>
            <person name="Mulligan S."/>
            <person name="Carty H.A."/>
            <person name="Cline R.T."/>
            <person name="Van Aken S.E."/>
            <person name="Gill J."/>
            <person name="Scarselli M."/>
            <person name="Mora M."/>
            <person name="Iacobini E.T."/>
            <person name="Brettoni C."/>
            <person name="Galli G."/>
            <person name="Mariani M."/>
            <person name="Vegni F."/>
            <person name="Maione D."/>
            <person name="Rinaudo D."/>
            <person name="Rappuoli R."/>
            <person name="Telford J.L."/>
            <person name="Kasper D.L."/>
            <person name="Grandi G."/>
            <person name="Fraser C.M."/>
        </authorList>
    </citation>
    <scope>NUCLEOTIDE SEQUENCE [LARGE SCALE GENOMIC DNA]</scope>
    <source>
        <strain>ATCC BAA-611 / 2603 V/R</strain>
    </source>
</reference>
<accession>P66865</accession>
<accession>Q8DYJ9</accession>
<accession>Q8E455</accession>
<keyword id="KW-0963">Cytoplasm</keyword>
<keyword id="KW-1185">Reference proteome</keyword>
<keyword id="KW-0694">RNA-binding</keyword>
<name>SSRP_STRA5</name>
<gene>
    <name evidence="1" type="primary">smpB</name>
    <name type="ordered locus">SAG1481</name>
</gene>
<proteinExistence type="inferred from homology"/>